<protein>
    <recommendedName>
        <fullName>Mediator of RNA polymerase II transcription subunit 12</fullName>
    </recommendedName>
    <alternativeName>
        <fullName>CeTRAP230</fullName>
    </alternativeName>
    <alternativeName>
        <fullName>Mediator complex subunit 12</fullName>
    </alternativeName>
    <alternativeName>
        <fullName>Protein dumpy-22</fullName>
    </alternativeName>
</protein>
<proteinExistence type="evidence at protein level"/>
<gene>
    <name type="primary">dpy-22</name>
    <name type="synonym">mdt-12</name>
    <name type="synonym">psa-6</name>
    <name type="synonym">sop-1</name>
    <name type="ORF">F47A4.2</name>
</gene>
<feature type="chain" id="PRO_0000312962" description="Mediator of RNA polymerase II transcription subunit 12">
    <location>
        <begin position="1"/>
        <end position="3498"/>
    </location>
</feature>
<feature type="region of interest" description="Disordered" evidence="3">
    <location>
        <begin position="365"/>
        <end position="456"/>
    </location>
</feature>
<feature type="region of interest" description="Disordered" evidence="3">
    <location>
        <begin position="497"/>
        <end position="764"/>
    </location>
</feature>
<feature type="region of interest" description="Required for nuclear localization">
    <location>
        <begin position="2142"/>
        <end position="3498"/>
    </location>
</feature>
<feature type="region of interest" description="Disordered" evidence="3">
    <location>
        <begin position="2209"/>
        <end position="2576"/>
    </location>
</feature>
<feature type="region of interest" description="Disordered" evidence="3">
    <location>
        <begin position="2589"/>
        <end position="2620"/>
    </location>
</feature>
<feature type="region of interest" description="Disordered" evidence="3">
    <location>
        <begin position="2637"/>
        <end position="2889"/>
    </location>
</feature>
<feature type="region of interest" description="Disordered" evidence="3">
    <location>
        <begin position="2917"/>
        <end position="3498"/>
    </location>
</feature>
<feature type="coiled-coil region" evidence="2">
    <location>
        <begin position="539"/>
        <end position="570"/>
    </location>
</feature>
<feature type="coiled-coil region" evidence="2">
    <location>
        <begin position="2203"/>
        <end position="2290"/>
    </location>
</feature>
<feature type="coiled-coil region" evidence="2">
    <location>
        <begin position="2395"/>
        <end position="2420"/>
    </location>
</feature>
<feature type="compositionally biased region" description="Basic residues" evidence="3">
    <location>
        <begin position="368"/>
        <end position="394"/>
    </location>
</feature>
<feature type="compositionally biased region" description="Basic and acidic residues" evidence="3">
    <location>
        <begin position="404"/>
        <end position="416"/>
    </location>
</feature>
<feature type="compositionally biased region" description="Polar residues" evidence="3">
    <location>
        <begin position="424"/>
        <end position="440"/>
    </location>
</feature>
<feature type="compositionally biased region" description="Polar residues" evidence="3">
    <location>
        <begin position="512"/>
        <end position="536"/>
    </location>
</feature>
<feature type="compositionally biased region" description="Basic and acidic residues" evidence="3">
    <location>
        <begin position="540"/>
        <end position="578"/>
    </location>
</feature>
<feature type="compositionally biased region" description="Basic and acidic residues" evidence="3">
    <location>
        <begin position="593"/>
        <end position="614"/>
    </location>
</feature>
<feature type="compositionally biased region" description="Low complexity" evidence="3">
    <location>
        <begin position="621"/>
        <end position="630"/>
    </location>
</feature>
<feature type="compositionally biased region" description="Basic and acidic residues" evidence="3">
    <location>
        <begin position="691"/>
        <end position="719"/>
    </location>
</feature>
<feature type="compositionally biased region" description="Basic and acidic residues" evidence="3">
    <location>
        <begin position="738"/>
        <end position="764"/>
    </location>
</feature>
<feature type="compositionally biased region" description="Basic and acidic residues" evidence="3">
    <location>
        <begin position="2209"/>
        <end position="2285"/>
    </location>
</feature>
<feature type="compositionally biased region" description="Low complexity" evidence="3">
    <location>
        <begin position="2342"/>
        <end position="2360"/>
    </location>
</feature>
<feature type="compositionally biased region" description="Low complexity" evidence="3">
    <location>
        <begin position="2409"/>
        <end position="2431"/>
    </location>
</feature>
<feature type="compositionally biased region" description="Polar residues" evidence="3">
    <location>
        <begin position="2444"/>
        <end position="2456"/>
    </location>
</feature>
<feature type="compositionally biased region" description="Low complexity" evidence="3">
    <location>
        <begin position="2459"/>
        <end position="2479"/>
    </location>
</feature>
<feature type="compositionally biased region" description="Polar residues" evidence="3">
    <location>
        <begin position="2514"/>
        <end position="2530"/>
    </location>
</feature>
<feature type="compositionally biased region" description="Basic and acidic residues" evidence="3">
    <location>
        <begin position="2547"/>
        <end position="2576"/>
    </location>
</feature>
<feature type="compositionally biased region" description="Basic and acidic residues" evidence="3">
    <location>
        <begin position="2589"/>
        <end position="2616"/>
    </location>
</feature>
<feature type="compositionally biased region" description="Basic and acidic residues" evidence="3">
    <location>
        <begin position="2637"/>
        <end position="2724"/>
    </location>
</feature>
<feature type="compositionally biased region" description="Low complexity" evidence="3">
    <location>
        <begin position="2725"/>
        <end position="2770"/>
    </location>
</feature>
<feature type="compositionally biased region" description="Polar residues" evidence="3">
    <location>
        <begin position="2771"/>
        <end position="2783"/>
    </location>
</feature>
<feature type="compositionally biased region" description="Low complexity" evidence="3">
    <location>
        <begin position="2784"/>
        <end position="2810"/>
    </location>
</feature>
<feature type="compositionally biased region" description="Polar residues" evidence="3">
    <location>
        <begin position="2816"/>
        <end position="2827"/>
    </location>
</feature>
<feature type="compositionally biased region" description="Polar residues" evidence="3">
    <location>
        <begin position="2842"/>
        <end position="2852"/>
    </location>
</feature>
<feature type="compositionally biased region" description="Polar residues" evidence="3">
    <location>
        <begin position="2868"/>
        <end position="2881"/>
    </location>
</feature>
<feature type="compositionally biased region" description="Polar residues" evidence="3">
    <location>
        <begin position="2926"/>
        <end position="2956"/>
    </location>
</feature>
<feature type="compositionally biased region" description="Low complexity" evidence="3">
    <location>
        <begin position="2957"/>
        <end position="2993"/>
    </location>
</feature>
<feature type="compositionally biased region" description="Polar residues" evidence="3">
    <location>
        <begin position="2994"/>
        <end position="3009"/>
    </location>
</feature>
<feature type="compositionally biased region" description="Low complexity" evidence="3">
    <location>
        <begin position="3039"/>
        <end position="3100"/>
    </location>
</feature>
<feature type="compositionally biased region" description="Polar residues" evidence="3">
    <location>
        <begin position="3103"/>
        <end position="3127"/>
    </location>
</feature>
<feature type="compositionally biased region" description="Low complexity" evidence="3">
    <location>
        <begin position="3128"/>
        <end position="3184"/>
    </location>
</feature>
<feature type="compositionally biased region" description="Low complexity" evidence="3">
    <location>
        <begin position="3192"/>
        <end position="3223"/>
    </location>
</feature>
<feature type="compositionally biased region" description="Polar residues" evidence="3">
    <location>
        <begin position="3231"/>
        <end position="3253"/>
    </location>
</feature>
<feature type="compositionally biased region" description="Low complexity" evidence="3">
    <location>
        <begin position="3254"/>
        <end position="3311"/>
    </location>
</feature>
<feature type="compositionally biased region" description="Gly residues" evidence="3">
    <location>
        <begin position="3312"/>
        <end position="3321"/>
    </location>
</feature>
<feature type="compositionally biased region" description="Low complexity" evidence="3">
    <location>
        <begin position="3336"/>
        <end position="3356"/>
    </location>
</feature>
<feature type="compositionally biased region" description="Low complexity" evidence="3">
    <location>
        <begin position="3370"/>
        <end position="3408"/>
    </location>
</feature>
<feature type="compositionally biased region" description="Polar residues" evidence="3">
    <location>
        <begin position="3414"/>
        <end position="3425"/>
    </location>
</feature>
<feature type="compositionally biased region" description="Low complexity" evidence="3">
    <location>
        <begin position="3426"/>
        <end position="3436"/>
    </location>
</feature>
<feature type="compositionally biased region" description="Gly residues" evidence="3">
    <location>
        <begin position="3437"/>
        <end position="3446"/>
    </location>
</feature>
<feature type="compositionally biased region" description="Low complexity" evidence="3">
    <location>
        <begin position="3447"/>
        <end position="3498"/>
    </location>
</feature>
<feature type="mutagenesis site" description="In os26; impairs asymmetric division of T-cells." evidence="7">
    <original>E</original>
    <variation>K</variation>
    <location>
        <position position="1040"/>
    </location>
</feature>
<evidence type="ECO:0000250" key="1"/>
<evidence type="ECO:0000255" key="2"/>
<evidence type="ECO:0000256" key="3">
    <source>
        <dbReference type="SAM" id="MobiDB-lite"/>
    </source>
</evidence>
<evidence type="ECO:0000269" key="4">
    <source>
    </source>
</evidence>
<evidence type="ECO:0000269" key="5">
    <source>
    </source>
</evidence>
<evidence type="ECO:0000269" key="6">
    <source>
    </source>
</evidence>
<evidence type="ECO:0000269" key="7">
    <source>
    </source>
</evidence>
<evidence type="ECO:0000305" key="8"/>
<comment type="function">
    <text evidence="1 4 5 6 7">Component of the Mediator complex, a coactivator involved in regulated gene transcription of nearly all RNA polymerase II-dependent genes. Mediator functions as a bridge to convey information from gene-specific regulatory proteins to the basal RNA polymerase II transcription machinery. Mediator is recruited to promoters by direct interactions with regulatory proteins and serves as a scaffold for the assembly of a functional preinitiation complex with RNA polymerase II and the general transcription factors (By similarity). Functions downstream of let-60 during vulval induction. Required for asymmetric division of T-cells and for hypodermal development.</text>
</comment>
<comment type="subunit">
    <text evidence="1">Component of the Mediator complex.</text>
</comment>
<comment type="subcellular location">
    <subcellularLocation>
        <location evidence="4 5 7">Nucleus</location>
    </subcellularLocation>
</comment>
<comment type="tissue specificity">
    <text evidence="4">Ubiquitously expressed.</text>
</comment>
<comment type="developmental stage">
    <text evidence="4">Expressed in vulval precursor cells, the anchor cell and the hyp7 cell at the time of vulval fate specification and throughout vulval development. Expressed from the 8-cell stage of embryogenesis.</text>
</comment>
<comment type="similarity">
    <text evidence="8">Belongs to the Mediator complex subunit 12 family.</text>
</comment>
<reference key="1">
    <citation type="journal article" date="1998" name="Science">
        <title>Genome sequence of the nematode C. elegans: a platform for investigating biology.</title>
        <authorList>
            <consortium name="The C. elegans sequencing consortium"/>
        </authorList>
    </citation>
    <scope>NUCLEOTIDE SEQUENCE [LARGE SCALE GENOMIC DNA]</scope>
    <source>
        <strain>Bristol N2</strain>
    </source>
</reference>
<reference key="2">
    <citation type="journal article" date="2000" name="Genes Dev.">
        <title>A C. elegans mediator protein confers regulatory selectivity on lineage-specific expression of a transcription factor gene.</title>
        <authorList>
            <person name="Zhang H."/>
            <person name="Emmons S.W."/>
        </authorList>
    </citation>
    <scope>FUNCTION</scope>
    <scope>SUBCELLULAR LOCATION</scope>
    <scope>TISSUE SPECIFICITY</scope>
    <scope>DEVELOPMENTAL STAGE</scope>
</reference>
<reference key="3">
    <citation type="journal article" date="2003" name="Development">
        <title>A component of the transcriptional mediator complex inhibits RAS-dependent vulval fate specification in C. elegans.</title>
        <authorList>
            <person name="Moghal N."/>
            <person name="Sternberg P.W."/>
        </authorList>
    </citation>
    <scope>FUNCTION</scope>
    <scope>SUBCELLULAR LOCATION</scope>
</reference>
<reference key="4">
    <citation type="journal article" date="2004" name="J. Biol. Chem.">
        <title>The Caenorhabditis elegans ortholog of TRAP240, CeTRAP240/let-19, selectively modulates gene expression and is essential for embryogenesis.</title>
        <authorList>
            <person name="Wang J.-C."/>
            <person name="Walker A."/>
            <person name="Blackwell T.K."/>
            <person name="Yamamoto K.R."/>
        </authorList>
    </citation>
    <scope>FUNCTION</scope>
</reference>
<reference key="5">
    <citation type="journal article" date="2005" name="Development">
        <title>Components of the transcriptional Mediator complex are required for asymmetric cell division in C. elegans.</title>
        <authorList>
            <person name="Yoda A."/>
            <person name="Kouike H."/>
            <person name="Okano H."/>
            <person name="Sawa H."/>
        </authorList>
    </citation>
    <scope>FUNCTION</scope>
    <scope>SUBCELLULAR LOCATION</scope>
    <scope>MUTAGENESIS OF GLU-1040</scope>
</reference>
<keyword id="KW-0010">Activator</keyword>
<keyword id="KW-0175">Coiled coil</keyword>
<keyword id="KW-0217">Developmental protein</keyword>
<keyword id="KW-0539">Nucleus</keyword>
<keyword id="KW-1185">Reference proteome</keyword>
<keyword id="KW-0678">Repressor</keyword>
<keyword id="KW-0804">Transcription</keyword>
<keyword id="KW-0805">Transcription regulation</keyword>
<organism>
    <name type="scientific">Caenorhabditis elegans</name>
    <dbReference type="NCBI Taxonomy" id="6239"/>
    <lineage>
        <taxon>Eukaryota</taxon>
        <taxon>Metazoa</taxon>
        <taxon>Ecdysozoa</taxon>
        <taxon>Nematoda</taxon>
        <taxon>Chromadorea</taxon>
        <taxon>Rhabditida</taxon>
        <taxon>Rhabditina</taxon>
        <taxon>Rhabditomorpha</taxon>
        <taxon>Rhabditoidea</taxon>
        <taxon>Rhabditidae</taxon>
        <taxon>Peloderinae</taxon>
        <taxon>Caenorhabditis</taxon>
    </lineage>
</organism>
<accession>Q20497</accession>
<dbReference type="EMBL" id="Z49888">
    <property type="protein sequence ID" value="CAA90064.1"/>
    <property type="molecule type" value="Genomic_DNA"/>
</dbReference>
<dbReference type="PIR" id="T22330">
    <property type="entry name" value="T22330"/>
</dbReference>
<dbReference type="RefSeq" id="NP_509645.1">
    <property type="nucleotide sequence ID" value="NM_077244.4"/>
</dbReference>
<dbReference type="SMR" id="Q20497"/>
<dbReference type="BioGRID" id="46109">
    <property type="interactions" value="21"/>
</dbReference>
<dbReference type="FunCoup" id="Q20497">
    <property type="interactions" value="2374"/>
</dbReference>
<dbReference type="IntAct" id="Q20497">
    <property type="interactions" value="1"/>
</dbReference>
<dbReference type="STRING" id="6239.F47A4.2.1"/>
<dbReference type="PaxDb" id="6239-F47A4.2"/>
<dbReference type="PeptideAtlas" id="Q20497"/>
<dbReference type="EnsemblMetazoa" id="F47A4.2.1">
    <property type="protein sequence ID" value="F47A4.2.1"/>
    <property type="gene ID" value="WBGene00001081"/>
</dbReference>
<dbReference type="GeneID" id="181194"/>
<dbReference type="KEGG" id="cel:CELE_F47A4.2"/>
<dbReference type="UCSC" id="F47A4.2">
    <property type="organism name" value="c. elegans"/>
</dbReference>
<dbReference type="AGR" id="WB:WBGene00001081"/>
<dbReference type="CTD" id="181194"/>
<dbReference type="WormBase" id="F47A4.2">
    <property type="protein sequence ID" value="CE16058"/>
    <property type="gene ID" value="WBGene00001081"/>
    <property type="gene designation" value="dpy-22"/>
</dbReference>
<dbReference type="eggNOG" id="KOG3598">
    <property type="taxonomic scope" value="Eukaryota"/>
</dbReference>
<dbReference type="GeneTree" id="ENSGT00440000037505"/>
<dbReference type="HOGENOM" id="CLU_000287_0_0_1"/>
<dbReference type="InParanoid" id="Q20497"/>
<dbReference type="OMA" id="ICEQDWV"/>
<dbReference type="OrthoDB" id="20828at2759"/>
<dbReference type="SignaLink" id="Q20497"/>
<dbReference type="PRO" id="PR:Q20497"/>
<dbReference type="Proteomes" id="UP000001940">
    <property type="component" value="Chromosome X"/>
</dbReference>
<dbReference type="Bgee" id="WBGene00001081">
    <property type="expression patterns" value="Expressed in pharyngeal muscle cell (C elegans) and 4 other cell types or tissues"/>
</dbReference>
<dbReference type="GO" id="GO:0016592">
    <property type="term" value="C:mediator complex"/>
    <property type="evidence" value="ECO:0000318"/>
    <property type="project" value="GO_Central"/>
</dbReference>
<dbReference type="GO" id="GO:0005634">
    <property type="term" value="C:nucleus"/>
    <property type="evidence" value="ECO:0000314"/>
    <property type="project" value="WormBase"/>
</dbReference>
<dbReference type="GO" id="GO:0003713">
    <property type="term" value="F:transcription coactivator activity"/>
    <property type="evidence" value="ECO:0000318"/>
    <property type="project" value="GO_Central"/>
</dbReference>
<dbReference type="GO" id="GO:0042059">
    <property type="term" value="P:negative regulation of epidermal growth factor receptor signaling pathway"/>
    <property type="evidence" value="ECO:0000316"/>
    <property type="project" value="WormBase"/>
</dbReference>
<dbReference type="GO" id="GO:0040027">
    <property type="term" value="P:negative regulation of vulval development"/>
    <property type="evidence" value="ECO:0000316"/>
    <property type="project" value="WormBase"/>
</dbReference>
<dbReference type="GO" id="GO:0045944">
    <property type="term" value="P:positive regulation of transcription by RNA polymerase II"/>
    <property type="evidence" value="ECO:0000318"/>
    <property type="project" value="GO_Central"/>
</dbReference>
<dbReference type="CDD" id="cd22249">
    <property type="entry name" value="UDM1_RNF168_RNF169-like"/>
    <property type="match status" value="1"/>
</dbReference>
<dbReference type="InterPro" id="IPR051647">
    <property type="entry name" value="Mediator_comp_sub12"/>
</dbReference>
<dbReference type="InterPro" id="IPR019035">
    <property type="entry name" value="Mediator_Med12"/>
</dbReference>
<dbReference type="InterPro" id="IPR021990">
    <property type="entry name" value="Mediator_Med12_LCEWAV"/>
</dbReference>
<dbReference type="PANTHER" id="PTHR46007">
    <property type="entry name" value="MEDIATOR OF RNA POLYMERASE II TRANSCRIPTION SUBUNIT 12"/>
    <property type="match status" value="1"/>
</dbReference>
<dbReference type="PANTHER" id="PTHR46007:SF7">
    <property type="entry name" value="MEDIATOR OF RNA POLYMERASE II TRANSCRIPTION SUBUNIT 12"/>
    <property type="match status" value="1"/>
</dbReference>
<dbReference type="Pfam" id="PF09497">
    <property type="entry name" value="Med12"/>
    <property type="match status" value="1"/>
</dbReference>
<dbReference type="Pfam" id="PF12145">
    <property type="entry name" value="Med12-LCEWAV"/>
    <property type="match status" value="1"/>
</dbReference>
<dbReference type="SMART" id="SM01281">
    <property type="entry name" value="Med12"/>
    <property type="match status" value="1"/>
</dbReference>
<sequence>MLRKTNLRMGTADVYKQNKNQEEDMLTTERLKKGYQMPLTQYELQSLVFNASENKLIRLEKAQKRSQSMIASVIHKKGEFHMNYDRERKIPKEQLPCFAPHNWKRILSDRVKFFSALARGTPLQQLSQRIPGFRRKELLFLEFSDYNISYDRAIWCVKLLCILGFNSSSKTQKKTLLDVATLELSQACNKTTIWLVTQLYKSFRNPIKRREATKTWNYLTGFMKYMFDDGVLDKQEFLNDLTEVFNQLFLQKNFKNPSVLSTFMKYYVYFVEDLSSSLVLARRSSTLLCQALGFLFEMAQDKRKIDAYYDSANKTFIKKEFENEDGEIYEFEDYDDFIDMLDEIPDVPYFDETDKTPEAQAEELIKQHEKRKAGSLKKSERRRRRGLSKNRPKKMPQNPSNEASLDHDKVQIKQEPMDYDEYGGQQSDNSMDYDSFSHQYDPSYEPLPFKPLHTDIPKKLTDDEEFKYMKIGKRSVTPERISGRYGSMTYPFWIQQGGVGIDPPKDEVLDFSNPTPTETVNTQPQIDFESSPSASPALSVDKENECEKKEDESKTKEKNKDKEKDKEKEKSVDEHTNDLDVPINPDDAEMADANDKTDASEKQKLVEEEPTGKENEDDTSSKTAKTSTSAEKSEAPSIVDSNDKIDKEPNASSTSNDETSKDDTVPMESDPPAATEKPKESTEITTEEPLEVDKAPEVDKSEKEHEDDIMIIESNKKADEDDCVVIAVVDPDQEQTPESEKKKDGEEERDKNKDTDVADNEPEKIYTDEELAEIKIRKEKEMKIATLASHIKEKMVSDKKWKEKTSHAGWRTLDQCSQFSEALHLLSSMVQYMACVTPESFVWNDLSVQQEERRHRILPQLCGSPLDYLPCELHKLPVMEGVEEVVDCLRLRHCEIVRRSQAAEDRWLPNAAFLQSFGRIIDTCVDVIGIMDNIDVEKPNAITNAGLRLFAFREKFEKQEALLKTMLMFKWCITEEREGSFRATYIAKLLRFGMDQNPENTIGGWQVMDLFFKFMSTEGPKHGSKMYQAHFDSTVAIMIEMMREKIFSITDILRELEKDSDLDYNAPLMERQRKQKIPKISKRHRKPETPDDTKLVHFTTEYTPKRLFMGKKMDLLERMIIILPQLDVDEDTDEYRLRRLLLFGLKPAANVYFRRARAIYKSITKEFTTRLYIEFDRSSKVTTAHKKINQNRLDDLLRQFRAQTYHDQHLILERIVYNFIDGIGGFLKKNCDDVPAPEVANIICEMYEFSMDITSIFDFFEMVNPYLKAVDDKIAHFRMDVLPDMYYTETAFIFVSFFMKHWQRFLLHPRACAIVNQCFVLIQDMIRADDHMITCWGRTVAIFVFHARKAIANAGLQNEEFLAEDSHFWRVFPNAQHVDLDVGYFNEDFAGVKLQLRGGTLRYDSYNDFKWLVSNMKPNLKKKPHLKRPNTRYSFVVRAFMEARQHGRNFDRINELANYCANITANDPPLSEYWIGAIKGLCFLSLDAPYPFKEMSQQIDISDCSTHYSLTTFITCLAGKSAFYIPRLLAELTKHVFPLMLRHDGRLTSQKTHDVKRKVASKTTESRTLSEAEPGVCLCLLIICGLCCVGDEPFGLSVHYRGIEKKKKRFNNTADERIMHLFHWFEMDHAMFRTLGHISQLLEALQSRCRDANLVLPKNFPIKNPPKHQQELHREKAPYRPQYLFNIAKTVQFVICEQDWVTLRMFRFFQTRKMEAFNQDKLKQNCLGQQILRMALRRRTERENVHKLFEAHKISKKATVDKVLSFMNLWNFRATLFDLMLMIKEISPDGNSRHAQQGAIAADALMSEIGKCCRDMFLSAYKTKIKMPIAKTLTDFRLSDINKFWLIAPLVRMCPKPINIPPQYANTTVGTVAAKFLREAALLMDTPPTTPKERLLQCSWAMSKVPFINMILTCLQCEKMQQSKDVFLQSLYTQLQRETLRDHHRRSNWTNRREHRDCTIFRITLIGYIYKEILKATHVETWGLLIFQLMFHGIINPVREKLIYETCFDMLHHMVLWTLVDGDSMNQHDRYGSIRVRWPQYAGLMKKIRKEMQERFTDQTRNSLHRFLPIGKMQMSTISYKKYQKRPKVNQKMSKKFLAGEGLKNGKYSFLPEEKAKTNAFEHTDHLGDLIVKGGWKFRMFQTTRLDKVAKNVQNVLRSNMHHTHVLEFNRPQLLMSDNMFDDIFLAPPDIEITKIIEQPVPVIDEEEAKKRAEEEKEAAEKKEESKNAEDEKNKNNAENKKDTKEGEKGKSKDKEKDGEKEKCKDASKKDDVTSEKNELEKRASDAAAATNAPETNKDMDTSTPKPAPVTRSPATRGRGGGRKRNSGARGGGPRAKRANSRADTAQAAAATTQWNAPIANTSNPAAGGNFHAAMRGNQPPMSNGSSDETKVHIRNLLNRKKEEKRNSLADASAAAAAANSNAMGNTSSMPPSGPPMPMGSSMQSAGATQQLQGMQKHQMGGSMSGMNQNMGGMNQSMSHQAPPPYSSTNEMNRPLMNQYGGPHFAAPNPGPLNRSSGPVSSETRQQIMEQQMREKLAAHHQLVEQQKQRDAREREAREREAREHQERMQREAYMKEQQLLERKRAIEENNRIMEEQQREREMEAARKEAARRAAEEAYAAEQQRLELLRRQEEERLRKEAEERMRIQRENEERVRQEQMRLEAEERERIRRAEEERIQKELEDKVRREKEEAARQEKERQEQEARMREAREAELSRQRMEQQRRSQQNPYMNQQGQYSQQPPPSYQQSSYPNNYQPGQQGNQPPNYQQPSHQSMQQGHQAGYQQTSNQMQMNMQQQQNRQQGGPQQSFSGPGGINQPSQPGYSGYNQQGGQGQQGQMQQQRNPFGNQQDMQQPGAAKLMHAKPNEAHAQQYQHTQNQLSLAQKEKEKQYFQAKNLQASQANAQQQQQRFGDVVAGNVAGYGRPYGQQQLGASDQMGTSQLPGASTSRMNQGSSNPQGGMQSYQQQQPVLGQPGPIQTGQSTQQQIPAQSQQQYNSGRPQMHTTPTKNDMSARAPSGAMGQIANRMGHGTNPQGYGSTGQNVPGGYQQGQQQSGQGSYPQAQQQQPNQYSGSNQQVGQQAQQQQQQPLNQNVSQSQSAAQFGRPSQDSAYQQSGYNQTGNQSYQRPDQQQQGAQQNQWSGSNQAQNQLRSQQQAQQPLQQPQQSQQFQQPAQQAKNPMAQSAQYGGFGGQQQGYDQQQQGQIAPQQAQNPQASQSYGQQQTQQNRYGMGSSGYTANSGGSSNILNQSMEESGLNQGFSGASSNASSQQGGSSQMQQSGYGMPGNQMQMQQNQKQQVQRGMPTGMGQTNMGQSGMGQSGMGQTGMSRSGLGGGIGQQGQQSQQPQQPQVSQQQNQRGMNPGAQLPPYSTGQQQHQPQQSQISQQQQQQDQYRRMQAAQMQQQPTAQGQQNRMGMPSQQQSGAAYSNQMQFQGVRQGQQGMGGMGGSGQQQPQTQPHGSNQYYQQQQDQRMQQQPQQPGQQQQHGYGMGQYPNQQPPNQY</sequence>
<name>MED12_CAEEL</name>